<organism>
    <name type="scientific">Dictyostelium discoideum</name>
    <name type="common">Social amoeba</name>
    <dbReference type="NCBI Taxonomy" id="44689"/>
    <lineage>
        <taxon>Eukaryota</taxon>
        <taxon>Amoebozoa</taxon>
        <taxon>Evosea</taxon>
        <taxon>Eumycetozoa</taxon>
        <taxon>Dictyostelia</taxon>
        <taxon>Dictyosteliales</taxon>
        <taxon>Dictyosteliaceae</taxon>
        <taxon>Dictyostelium</taxon>
    </lineage>
</organism>
<gene>
    <name type="primary">phlp1</name>
    <name type="ORF">DDB_G0292850</name>
</gene>
<sequence length="316" mass="36853">MEQNILNSILDKFGDGDQERSDIRHNDSGDENDNHSDHEGNHGNNECCEGNEDGDKEYEVDVEDMTDEQYAQFIQEQQEPKIKSGGNTGVKGVLSDYAEHREKQKQKYLQKKYETQKMLEKMCFTTRDQPPPTEEENQLDSDDDDLERIRKARMEQWKSKQQITSDVKKPEKKVFGYFKQIDSSQYIHEIDNEPPNVFVIIHLFQNYIPECVLLNQQLGQLAVKYRYIKFLKILSKEAKENYHDEALPSLLVYIGGKLLVSFVPLTEELGRNFDQEDLELLLSSYDIIPNPMKAKNSNWETSLSRKRPESDDDNDD</sequence>
<keyword id="KW-0143">Chaperone</keyword>
<keyword id="KW-0145">Chemotaxis</keyword>
<keyword id="KW-0175">Coiled coil</keyword>
<keyword id="KW-0963">Cytoplasm</keyword>
<keyword id="KW-1185">Reference proteome</keyword>
<keyword id="KW-0716">Sensory transduction</keyword>
<protein>
    <recommendedName>
        <fullName>Phosducin-like protein 1</fullName>
    </recommendedName>
</protein>
<comment type="function">
    <text evidence="3 4">Required for normal chemotaxis in response to cAMP and folate. Required for the heterodimerization of the G protein beta and gamma subunits gpbA and gpgA, which is itself thought to be necessary for prenylation of the gamma subunit gpgA and its association with plasma membranes.</text>
</comment>
<comment type="subcellular location">
    <subcellularLocation>
        <location evidence="4">Cytoplasm</location>
    </subcellularLocation>
</comment>
<comment type="similarity">
    <text evidence="5">Belongs to the phosducin family.</text>
</comment>
<reference key="1">
    <citation type="journal article" date="2003" name="EMBO J.">
        <title>Phosducin-like proteins in Dictyostelium discoideum: implications for the phosducin family of proteins.</title>
        <authorList>
            <person name="Blaauw M."/>
            <person name="Knol J.C."/>
            <person name="Kortholt A."/>
            <person name="Roelofs J."/>
            <person name="Ruchira X."/>
            <person name="Postma M."/>
            <person name="Visser A.J.W.G."/>
            <person name="van Haastert P.J.M."/>
        </authorList>
    </citation>
    <scope>NUCLEOTIDE SEQUENCE [MRNA]</scope>
    <scope>FUNCTION</scope>
    <scope>THIOREDOXIN FOLD REGION</scope>
</reference>
<reference key="2">
    <citation type="journal article" date="2005" name="Nature">
        <title>The genome of the social amoeba Dictyostelium discoideum.</title>
        <authorList>
            <person name="Eichinger L."/>
            <person name="Pachebat J.A."/>
            <person name="Gloeckner G."/>
            <person name="Rajandream M.A."/>
            <person name="Sucgang R."/>
            <person name="Berriman M."/>
            <person name="Song J."/>
            <person name="Olsen R."/>
            <person name="Szafranski K."/>
            <person name="Xu Q."/>
            <person name="Tunggal B."/>
            <person name="Kummerfeld S."/>
            <person name="Madera M."/>
            <person name="Konfortov B.A."/>
            <person name="Rivero F."/>
            <person name="Bankier A.T."/>
            <person name="Lehmann R."/>
            <person name="Hamlin N."/>
            <person name="Davies R."/>
            <person name="Gaudet P."/>
            <person name="Fey P."/>
            <person name="Pilcher K."/>
            <person name="Chen G."/>
            <person name="Saunders D."/>
            <person name="Sodergren E.J."/>
            <person name="Davis P."/>
            <person name="Kerhornou A."/>
            <person name="Nie X."/>
            <person name="Hall N."/>
            <person name="Anjard C."/>
            <person name="Hemphill L."/>
            <person name="Bason N."/>
            <person name="Farbrother P."/>
            <person name="Desany B."/>
            <person name="Just E."/>
            <person name="Morio T."/>
            <person name="Rost R."/>
            <person name="Churcher C.M."/>
            <person name="Cooper J."/>
            <person name="Haydock S."/>
            <person name="van Driessche N."/>
            <person name="Cronin A."/>
            <person name="Goodhead I."/>
            <person name="Muzny D.M."/>
            <person name="Mourier T."/>
            <person name="Pain A."/>
            <person name="Lu M."/>
            <person name="Harper D."/>
            <person name="Lindsay R."/>
            <person name="Hauser H."/>
            <person name="James K.D."/>
            <person name="Quiles M."/>
            <person name="Madan Babu M."/>
            <person name="Saito T."/>
            <person name="Buchrieser C."/>
            <person name="Wardroper A."/>
            <person name="Felder M."/>
            <person name="Thangavelu M."/>
            <person name="Johnson D."/>
            <person name="Knights A."/>
            <person name="Loulseged H."/>
            <person name="Mungall K.L."/>
            <person name="Oliver K."/>
            <person name="Price C."/>
            <person name="Quail M.A."/>
            <person name="Urushihara H."/>
            <person name="Hernandez J."/>
            <person name="Rabbinowitsch E."/>
            <person name="Steffen D."/>
            <person name="Sanders M."/>
            <person name="Ma J."/>
            <person name="Kohara Y."/>
            <person name="Sharp S."/>
            <person name="Simmonds M.N."/>
            <person name="Spiegler S."/>
            <person name="Tivey A."/>
            <person name="Sugano S."/>
            <person name="White B."/>
            <person name="Walker D."/>
            <person name="Woodward J.R."/>
            <person name="Winckler T."/>
            <person name="Tanaka Y."/>
            <person name="Shaulsky G."/>
            <person name="Schleicher M."/>
            <person name="Weinstock G.M."/>
            <person name="Rosenthal A."/>
            <person name="Cox E.C."/>
            <person name="Chisholm R.L."/>
            <person name="Gibbs R.A."/>
            <person name="Loomis W.F."/>
            <person name="Platzer M."/>
            <person name="Kay R.R."/>
            <person name="Williams J.G."/>
            <person name="Dear P.H."/>
            <person name="Noegel A.A."/>
            <person name="Barrell B.G."/>
            <person name="Kuspa A."/>
        </authorList>
    </citation>
    <scope>NUCLEOTIDE SEQUENCE [LARGE SCALE GENOMIC DNA]</scope>
    <source>
        <strain>AX4</strain>
    </source>
</reference>
<reference key="3">
    <citation type="journal article" date="2005" name="Mol. Cell. Biol.">
        <title>The phosducin-like protein PhLP1 is essential for Gbetagamma dimer formation in Dictyostelium discoideum.</title>
        <authorList>
            <person name="Knol J.C."/>
            <person name="Engel R."/>
            <person name="Blaauw M."/>
            <person name="Visser A.J.W.G."/>
            <person name="van Haastert P.J.M."/>
        </authorList>
    </citation>
    <scope>FUNCTION</scope>
    <scope>SUBCELLULAR LOCATION</scope>
</reference>
<accession>Q71A39</accession>
<accession>Q54CH7</accession>
<dbReference type="EMBL" id="AF540058">
    <property type="protein sequence ID" value="AAQ11192.1"/>
    <property type="molecule type" value="mRNA"/>
</dbReference>
<dbReference type="EMBL" id="AAFI02000197">
    <property type="protein sequence ID" value="EAL60974.1"/>
    <property type="molecule type" value="Genomic_DNA"/>
</dbReference>
<dbReference type="RefSeq" id="XP_629439.1">
    <property type="nucleotide sequence ID" value="XM_629437.1"/>
</dbReference>
<dbReference type="SMR" id="Q71A39"/>
<dbReference type="FunCoup" id="Q71A39">
    <property type="interactions" value="193"/>
</dbReference>
<dbReference type="STRING" id="44689.Q71A39"/>
<dbReference type="PaxDb" id="44689-DDB0201654"/>
<dbReference type="EnsemblProtists" id="EAL60974">
    <property type="protein sequence ID" value="EAL60974"/>
    <property type="gene ID" value="DDB_G0292850"/>
</dbReference>
<dbReference type="GeneID" id="8628958"/>
<dbReference type="KEGG" id="ddi:DDB_G0292850"/>
<dbReference type="dictyBase" id="DDB_G0292850">
    <property type="gene designation" value="phlp1"/>
</dbReference>
<dbReference type="VEuPathDB" id="AmoebaDB:DDB_G0292850"/>
<dbReference type="eggNOG" id="KOG3170">
    <property type="taxonomic scope" value="Eukaryota"/>
</dbReference>
<dbReference type="HOGENOM" id="CLU_881170_0_0_1"/>
<dbReference type="InParanoid" id="Q71A39"/>
<dbReference type="OMA" id="GIIEMMP"/>
<dbReference type="PhylomeDB" id="Q71A39"/>
<dbReference type="PRO" id="PR:Q71A39"/>
<dbReference type="Proteomes" id="UP000002195">
    <property type="component" value="Chromosome 6"/>
</dbReference>
<dbReference type="GO" id="GO:0005737">
    <property type="term" value="C:cytoplasm"/>
    <property type="evidence" value="ECO:0000318"/>
    <property type="project" value="GO_Central"/>
</dbReference>
<dbReference type="GO" id="GO:0005829">
    <property type="term" value="C:cytosol"/>
    <property type="evidence" value="ECO:0000314"/>
    <property type="project" value="dictyBase"/>
</dbReference>
<dbReference type="GO" id="GO:0140597">
    <property type="term" value="F:protein carrier chaperone"/>
    <property type="evidence" value="ECO:0000314"/>
    <property type="project" value="dictyBase"/>
</dbReference>
<dbReference type="GO" id="GO:0043327">
    <property type="term" value="P:chemotaxis to cAMP"/>
    <property type="evidence" value="ECO:0000315"/>
    <property type="project" value="dictyBase"/>
</dbReference>
<dbReference type="GO" id="GO:0043326">
    <property type="term" value="P:chemotaxis to folate"/>
    <property type="evidence" value="ECO:0000315"/>
    <property type="project" value="dictyBase"/>
</dbReference>
<dbReference type="GO" id="GO:1902605">
    <property type="term" value="P:heterotrimeric G-protein complex assembly"/>
    <property type="evidence" value="ECO:0000315"/>
    <property type="project" value="dictyBase"/>
</dbReference>
<dbReference type="GO" id="GO:0006457">
    <property type="term" value="P:protein folding"/>
    <property type="evidence" value="ECO:0000318"/>
    <property type="project" value="GO_Central"/>
</dbReference>
<dbReference type="GO" id="GO:0072659">
    <property type="term" value="P:protein localization to plasma membrane"/>
    <property type="evidence" value="ECO:0000315"/>
    <property type="project" value="dictyBase"/>
</dbReference>
<dbReference type="GO" id="GO:0008277">
    <property type="term" value="P:regulation of G protein-coupled receptor signaling pathway"/>
    <property type="evidence" value="ECO:0000315"/>
    <property type="project" value="dictyBase"/>
</dbReference>
<dbReference type="CDD" id="cd02987">
    <property type="entry name" value="Phd_like_Phd"/>
    <property type="match status" value="1"/>
</dbReference>
<dbReference type="Gene3D" id="3.40.30.10">
    <property type="entry name" value="Glutaredoxin"/>
    <property type="match status" value="1"/>
</dbReference>
<dbReference type="Gene3D" id="1.10.168.10">
    <property type="entry name" value="Phosducin, domain 2"/>
    <property type="match status" value="1"/>
</dbReference>
<dbReference type="InterPro" id="IPR001200">
    <property type="entry name" value="Phosducin"/>
</dbReference>
<dbReference type="InterPro" id="IPR051498">
    <property type="entry name" value="Phosducin-like_chap/apop_reg"/>
</dbReference>
<dbReference type="InterPro" id="IPR023196">
    <property type="entry name" value="Phosducin_N_dom_sf"/>
</dbReference>
<dbReference type="InterPro" id="IPR024253">
    <property type="entry name" value="Phosducin_thioredoxin-like_dom"/>
</dbReference>
<dbReference type="InterPro" id="IPR036249">
    <property type="entry name" value="Thioredoxin-like_sf"/>
</dbReference>
<dbReference type="PANTHER" id="PTHR45809:SF2">
    <property type="entry name" value="PHOSDUCIN-LIKE PROTEIN 1"/>
    <property type="match status" value="1"/>
</dbReference>
<dbReference type="PANTHER" id="PTHR45809">
    <property type="entry name" value="VIRAL IAP-ASSOCIATED FACTOR HOMOLOG"/>
    <property type="match status" value="1"/>
</dbReference>
<dbReference type="Pfam" id="PF02114">
    <property type="entry name" value="Phosducin"/>
    <property type="match status" value="1"/>
</dbReference>
<dbReference type="PRINTS" id="PR00677">
    <property type="entry name" value="PHOSDUCIN"/>
</dbReference>
<dbReference type="SUPFAM" id="SSF52833">
    <property type="entry name" value="Thioredoxin-like"/>
    <property type="match status" value="1"/>
</dbReference>
<feature type="chain" id="PRO_0000326487" description="Phosducin-like protein 1">
    <location>
        <begin position="1"/>
        <end position="316"/>
    </location>
</feature>
<feature type="domain" description="Phosducin" evidence="1">
    <location>
        <begin position="95"/>
        <end position="290"/>
    </location>
</feature>
<feature type="region of interest" description="Disordered" evidence="2">
    <location>
        <begin position="1"/>
        <end position="61"/>
    </location>
</feature>
<feature type="region of interest" description="Thioredoxin fold">
    <location>
        <begin position="175"/>
        <end position="316"/>
    </location>
</feature>
<feature type="region of interest" description="Disordered" evidence="2">
    <location>
        <begin position="293"/>
        <end position="316"/>
    </location>
</feature>
<feature type="coiled-coil region" evidence="1">
    <location>
        <begin position="102"/>
        <end position="156"/>
    </location>
</feature>
<feature type="compositionally biased region" description="Basic and acidic residues" evidence="2">
    <location>
        <begin position="12"/>
        <end position="41"/>
    </location>
</feature>
<feature type="compositionally biased region" description="Acidic residues" evidence="2">
    <location>
        <begin position="49"/>
        <end position="61"/>
    </location>
</feature>
<name>PHLP1_DICDI</name>
<evidence type="ECO:0000255" key="1"/>
<evidence type="ECO:0000256" key="2">
    <source>
        <dbReference type="SAM" id="MobiDB-lite"/>
    </source>
</evidence>
<evidence type="ECO:0000269" key="3">
    <source>
    </source>
</evidence>
<evidence type="ECO:0000269" key="4">
    <source>
    </source>
</evidence>
<evidence type="ECO:0000305" key="5"/>
<proteinExistence type="evidence at transcript level"/>